<organism>
    <name type="scientific">Mycobacterium tuberculosis (strain ATCC 25177 / H37Ra)</name>
    <dbReference type="NCBI Taxonomy" id="419947"/>
    <lineage>
        <taxon>Bacteria</taxon>
        <taxon>Bacillati</taxon>
        <taxon>Actinomycetota</taxon>
        <taxon>Actinomycetes</taxon>
        <taxon>Mycobacteriales</taxon>
        <taxon>Mycobacteriaceae</taxon>
        <taxon>Mycobacterium</taxon>
        <taxon>Mycobacterium tuberculosis complex</taxon>
    </lineage>
</organism>
<protein>
    <recommendedName>
        <fullName evidence="1">3-isopropylmalate dehydratase small subunit</fullName>
        <ecNumber evidence="1">4.2.1.33</ecNumber>
    </recommendedName>
    <alternativeName>
        <fullName evidence="1">Alpha-IPM isomerase</fullName>
        <shortName evidence="1">IPMI</shortName>
    </alternativeName>
    <alternativeName>
        <fullName evidence="1">Isopropylmalate isomerase</fullName>
    </alternativeName>
</protein>
<comment type="function">
    <text evidence="1">Catalyzes the isomerization between 2-isopropylmalate and 3-isopropylmalate, via the formation of 2-isopropylmaleate.</text>
</comment>
<comment type="catalytic activity">
    <reaction evidence="1">
        <text>(2R,3S)-3-isopropylmalate = (2S)-2-isopropylmalate</text>
        <dbReference type="Rhea" id="RHEA:32287"/>
        <dbReference type="ChEBI" id="CHEBI:1178"/>
        <dbReference type="ChEBI" id="CHEBI:35121"/>
        <dbReference type="EC" id="4.2.1.33"/>
    </reaction>
</comment>
<comment type="pathway">
    <text evidence="1">Amino-acid biosynthesis; L-leucine biosynthesis; L-leucine from 3-methyl-2-oxobutanoate: step 2/4.</text>
</comment>
<comment type="subunit">
    <text evidence="1">Heterodimer of LeuC and LeuD.</text>
</comment>
<comment type="similarity">
    <text evidence="1">Belongs to the LeuD family. LeuD type 1 subfamily.</text>
</comment>
<proteinExistence type="inferred from homology"/>
<keyword id="KW-0028">Amino-acid biosynthesis</keyword>
<keyword id="KW-0100">Branched-chain amino acid biosynthesis</keyword>
<keyword id="KW-0432">Leucine biosynthesis</keyword>
<keyword id="KW-0456">Lyase</keyword>
<keyword id="KW-1185">Reference proteome</keyword>
<evidence type="ECO:0000255" key="1">
    <source>
        <dbReference type="HAMAP-Rule" id="MF_01031"/>
    </source>
</evidence>
<feature type="chain" id="PRO_1000063792" description="3-isopropylmalate dehydratase small subunit">
    <location>
        <begin position="1"/>
        <end position="198"/>
    </location>
</feature>
<gene>
    <name evidence="1" type="primary">leuD</name>
    <name type="ordered locus">MRA_3016</name>
</gene>
<accession>A5U6Z8</accession>
<reference key="1">
    <citation type="journal article" date="2008" name="PLoS ONE">
        <title>Genetic basis of virulence attenuation revealed by comparative genomic analysis of Mycobacterium tuberculosis strain H37Ra versus H37Rv.</title>
        <authorList>
            <person name="Zheng H."/>
            <person name="Lu L."/>
            <person name="Wang B."/>
            <person name="Pu S."/>
            <person name="Zhang X."/>
            <person name="Zhu G."/>
            <person name="Shi W."/>
            <person name="Zhang L."/>
            <person name="Wang H."/>
            <person name="Wang S."/>
            <person name="Zhao G."/>
            <person name="Zhang Y."/>
        </authorList>
    </citation>
    <scope>NUCLEOTIDE SEQUENCE [LARGE SCALE GENOMIC DNA]</scope>
    <source>
        <strain>ATCC 25177 / H37Ra</strain>
    </source>
</reference>
<name>LEUD_MYCTA</name>
<dbReference type="EC" id="4.2.1.33" evidence="1"/>
<dbReference type="EMBL" id="CP000611">
    <property type="protein sequence ID" value="ABQ74798.1"/>
    <property type="molecule type" value="Genomic_DNA"/>
</dbReference>
<dbReference type="RefSeq" id="WP_003415110.1">
    <property type="nucleotide sequence ID" value="NZ_CP016972.1"/>
</dbReference>
<dbReference type="SMR" id="A5U6Z8"/>
<dbReference type="GeneID" id="45426976"/>
<dbReference type="KEGG" id="mra:MRA_3016"/>
<dbReference type="eggNOG" id="COG0066">
    <property type="taxonomic scope" value="Bacteria"/>
</dbReference>
<dbReference type="HOGENOM" id="CLU_081378_0_1_11"/>
<dbReference type="UniPathway" id="UPA00048">
    <property type="reaction ID" value="UER00071"/>
</dbReference>
<dbReference type="Proteomes" id="UP000001988">
    <property type="component" value="Chromosome"/>
</dbReference>
<dbReference type="GO" id="GO:0009316">
    <property type="term" value="C:3-isopropylmalate dehydratase complex"/>
    <property type="evidence" value="ECO:0007669"/>
    <property type="project" value="InterPro"/>
</dbReference>
<dbReference type="GO" id="GO:0003861">
    <property type="term" value="F:3-isopropylmalate dehydratase activity"/>
    <property type="evidence" value="ECO:0007669"/>
    <property type="project" value="UniProtKB-UniRule"/>
</dbReference>
<dbReference type="GO" id="GO:0009098">
    <property type="term" value="P:L-leucine biosynthetic process"/>
    <property type="evidence" value="ECO:0007669"/>
    <property type="project" value="UniProtKB-UniRule"/>
</dbReference>
<dbReference type="CDD" id="cd01577">
    <property type="entry name" value="IPMI_Swivel"/>
    <property type="match status" value="1"/>
</dbReference>
<dbReference type="FunFam" id="3.20.19.10:FF:000003">
    <property type="entry name" value="3-isopropylmalate dehydratase small subunit"/>
    <property type="match status" value="1"/>
</dbReference>
<dbReference type="Gene3D" id="3.20.19.10">
    <property type="entry name" value="Aconitase, domain 4"/>
    <property type="match status" value="1"/>
</dbReference>
<dbReference type="HAMAP" id="MF_01031">
    <property type="entry name" value="LeuD_type1"/>
    <property type="match status" value="1"/>
</dbReference>
<dbReference type="InterPro" id="IPR004431">
    <property type="entry name" value="3-IsopropMal_deHydase_ssu"/>
</dbReference>
<dbReference type="InterPro" id="IPR015928">
    <property type="entry name" value="Aconitase/3IPM_dehydase_swvl"/>
</dbReference>
<dbReference type="InterPro" id="IPR000573">
    <property type="entry name" value="AconitaseA/IPMdHydase_ssu_swvl"/>
</dbReference>
<dbReference type="InterPro" id="IPR033940">
    <property type="entry name" value="IPMI_Swivel"/>
</dbReference>
<dbReference type="InterPro" id="IPR050075">
    <property type="entry name" value="LeuD"/>
</dbReference>
<dbReference type="NCBIfam" id="TIGR00171">
    <property type="entry name" value="leuD"/>
    <property type="match status" value="1"/>
</dbReference>
<dbReference type="NCBIfam" id="NF002458">
    <property type="entry name" value="PRK01641.1"/>
    <property type="match status" value="1"/>
</dbReference>
<dbReference type="PANTHER" id="PTHR43345:SF5">
    <property type="entry name" value="3-ISOPROPYLMALATE DEHYDRATASE SMALL SUBUNIT"/>
    <property type="match status" value="1"/>
</dbReference>
<dbReference type="PANTHER" id="PTHR43345">
    <property type="entry name" value="3-ISOPROPYLMALATE DEHYDRATASE SMALL SUBUNIT 2-RELATED-RELATED"/>
    <property type="match status" value="1"/>
</dbReference>
<dbReference type="Pfam" id="PF00694">
    <property type="entry name" value="Aconitase_C"/>
    <property type="match status" value="1"/>
</dbReference>
<dbReference type="SUPFAM" id="SSF52016">
    <property type="entry name" value="LeuD/IlvD-like"/>
    <property type="match status" value="1"/>
</dbReference>
<sequence>MEAFHTHSGIGVPLRRSNVDTDQIIPAVFLKRVTRTGFEDGLFAGWRSDPAFVLNLSPFDRGSVLVAGPDFGTGSSREHAVWALMDYGFRVVISSRFGDIFRGNAGKAGLLAAEVAQDDVELLWKLIEQSPGLEITANLQDRIITAATVVLPFKIDDHSAWRLLEGLDDIALTLRKLDEIEAFEGACAYWKPRTLPAP</sequence>